<sequence>MVRAKRKLDHIEYALSTGQSRTHGFHDIEFVHQSLPNSSYETITCETKIGELSLSSPIFINAMTGGGGEKTLHINEQLAYVAKHHNLAMAVGSQMAALKDESEAASYKIIRKVNPNGIFFANLGSEATVEQAERAVDMVGANALQIHLNVIQELTMPEGDRDFTGVLQRIEEIVLNSKVPVIVKEVGFGMSKETMQQLASVGVTAIDIGGQGGTNFAAVENERRQRMLSYFNNWGIQTATSIIEATSTNNNLSFIASGGIQTALDVAKAIALGANTTAFAGYFLRILMEDGIEKLVDEIDLLHTDLKFIMTALGAKTIEELQSVPLVIKGETYHWLTQRGIDTTHYSRR</sequence>
<feature type="chain" id="PRO_1000133427" description="Isopentenyl-diphosphate delta-isomerase">
    <location>
        <begin position="1"/>
        <end position="349"/>
    </location>
</feature>
<feature type="binding site" evidence="1">
    <location>
        <begin position="6"/>
        <end position="7"/>
    </location>
    <ligand>
        <name>substrate</name>
    </ligand>
</feature>
<feature type="binding site" evidence="1">
    <location>
        <begin position="62"/>
        <end position="64"/>
    </location>
    <ligand>
        <name>FMN</name>
        <dbReference type="ChEBI" id="CHEBI:58210"/>
    </ligand>
</feature>
<feature type="binding site" evidence="1">
    <location>
        <position position="93"/>
    </location>
    <ligand>
        <name>FMN</name>
        <dbReference type="ChEBI" id="CHEBI:58210"/>
    </ligand>
</feature>
<feature type="binding site" evidence="1">
    <location>
        <position position="122"/>
    </location>
    <ligand>
        <name>FMN</name>
        <dbReference type="ChEBI" id="CHEBI:58210"/>
    </ligand>
</feature>
<feature type="binding site" evidence="1">
    <location>
        <position position="152"/>
    </location>
    <ligand>
        <name>substrate</name>
    </ligand>
</feature>
<feature type="binding site" evidence="1">
    <location>
        <position position="153"/>
    </location>
    <ligand>
        <name>Mg(2+)</name>
        <dbReference type="ChEBI" id="CHEBI:18420"/>
    </ligand>
</feature>
<feature type="binding site" evidence="1">
    <location>
        <position position="184"/>
    </location>
    <ligand>
        <name>FMN</name>
        <dbReference type="ChEBI" id="CHEBI:58210"/>
    </ligand>
</feature>
<feature type="binding site" evidence="1">
    <location>
        <position position="214"/>
    </location>
    <ligand>
        <name>FMN</name>
        <dbReference type="ChEBI" id="CHEBI:58210"/>
    </ligand>
</feature>
<feature type="binding site" evidence="1">
    <location>
        <begin position="258"/>
        <end position="259"/>
    </location>
    <ligand>
        <name>FMN</name>
        <dbReference type="ChEBI" id="CHEBI:58210"/>
    </ligand>
</feature>
<feature type="binding site" evidence="1">
    <location>
        <begin position="280"/>
        <end position="281"/>
    </location>
    <ligand>
        <name>FMN</name>
        <dbReference type="ChEBI" id="CHEBI:58210"/>
    </ligand>
</feature>
<protein>
    <recommendedName>
        <fullName evidence="1">Isopentenyl-diphosphate delta-isomerase</fullName>
        <shortName evidence="1">IPP isomerase</shortName>
        <ecNumber evidence="1">5.3.3.2</ecNumber>
    </recommendedName>
    <alternativeName>
        <fullName evidence="1">Isopentenyl diphosphate:dimethylallyl diphosphate isomerase</fullName>
    </alternativeName>
    <alternativeName>
        <fullName evidence="1">Isopentenyl pyrophosphate isomerase</fullName>
    </alternativeName>
    <alternativeName>
        <fullName evidence="1">Type 2 isopentenyl diphosphate isomerase</fullName>
        <shortName evidence="1">IDI-2</shortName>
    </alternativeName>
</protein>
<comment type="function">
    <text evidence="1">Involved in the biosynthesis of isoprenoids. Catalyzes the 1,3-allylic rearrangement of the homoallylic substrate isopentenyl (IPP) to its allylic isomer, dimethylallyl diphosphate (DMAPP).</text>
</comment>
<comment type="catalytic activity">
    <reaction evidence="1">
        <text>isopentenyl diphosphate = dimethylallyl diphosphate</text>
        <dbReference type="Rhea" id="RHEA:23284"/>
        <dbReference type="ChEBI" id="CHEBI:57623"/>
        <dbReference type="ChEBI" id="CHEBI:128769"/>
        <dbReference type="EC" id="5.3.3.2"/>
    </reaction>
</comment>
<comment type="cofactor">
    <cofactor evidence="1">
        <name>FMN</name>
        <dbReference type="ChEBI" id="CHEBI:58210"/>
    </cofactor>
</comment>
<comment type="cofactor">
    <cofactor evidence="1">
        <name>NADPH</name>
        <dbReference type="ChEBI" id="CHEBI:57783"/>
    </cofactor>
</comment>
<comment type="cofactor">
    <cofactor evidence="1">
        <name>Mg(2+)</name>
        <dbReference type="ChEBI" id="CHEBI:18420"/>
    </cofactor>
</comment>
<comment type="subunit">
    <text evidence="1">Homooctamer. Dimer of tetramers.</text>
</comment>
<comment type="subcellular location">
    <subcellularLocation>
        <location evidence="1">Cytoplasm</location>
    </subcellularLocation>
</comment>
<comment type="similarity">
    <text evidence="1">Belongs to the IPP isomerase type 2 family.</text>
</comment>
<accession>C3L9F9</accession>
<reference key="1">
    <citation type="submission" date="2008-10" db="EMBL/GenBank/DDBJ databases">
        <title>Genome sequence of Bacillus anthracis str. CDC 684.</title>
        <authorList>
            <person name="Dodson R.J."/>
            <person name="Munk A.C."/>
            <person name="Brettin T."/>
            <person name="Bruce D."/>
            <person name="Detter C."/>
            <person name="Tapia R."/>
            <person name="Han C."/>
            <person name="Sutton G."/>
            <person name="Sims D."/>
        </authorList>
    </citation>
    <scope>NUCLEOTIDE SEQUENCE [LARGE SCALE GENOMIC DNA]</scope>
    <source>
        <strain>CDC 684 / NRRL 3495</strain>
    </source>
</reference>
<keyword id="KW-0963">Cytoplasm</keyword>
<keyword id="KW-0285">Flavoprotein</keyword>
<keyword id="KW-0288">FMN</keyword>
<keyword id="KW-0413">Isomerase</keyword>
<keyword id="KW-0414">Isoprene biosynthesis</keyword>
<keyword id="KW-0460">Magnesium</keyword>
<keyword id="KW-0479">Metal-binding</keyword>
<keyword id="KW-0521">NADP</keyword>
<dbReference type="EC" id="5.3.3.2" evidence="1"/>
<dbReference type="EMBL" id="CP001215">
    <property type="protein sequence ID" value="ACP12220.1"/>
    <property type="molecule type" value="Genomic_DNA"/>
</dbReference>
<dbReference type="RefSeq" id="WP_000251061.1">
    <property type="nucleotide sequence ID" value="NC_012581.1"/>
</dbReference>
<dbReference type="SMR" id="C3L9F9"/>
<dbReference type="KEGG" id="bah:BAMEG_3073"/>
<dbReference type="HOGENOM" id="CLU_065515_0_0_9"/>
<dbReference type="GO" id="GO:0005737">
    <property type="term" value="C:cytoplasm"/>
    <property type="evidence" value="ECO:0007669"/>
    <property type="project" value="UniProtKB-SubCell"/>
</dbReference>
<dbReference type="GO" id="GO:0010181">
    <property type="term" value="F:FMN binding"/>
    <property type="evidence" value="ECO:0007669"/>
    <property type="project" value="UniProtKB-UniRule"/>
</dbReference>
<dbReference type="GO" id="GO:0004452">
    <property type="term" value="F:isopentenyl-diphosphate delta-isomerase activity"/>
    <property type="evidence" value="ECO:0007669"/>
    <property type="project" value="UniProtKB-UniRule"/>
</dbReference>
<dbReference type="GO" id="GO:0000287">
    <property type="term" value="F:magnesium ion binding"/>
    <property type="evidence" value="ECO:0007669"/>
    <property type="project" value="UniProtKB-UniRule"/>
</dbReference>
<dbReference type="GO" id="GO:0070402">
    <property type="term" value="F:NADPH binding"/>
    <property type="evidence" value="ECO:0007669"/>
    <property type="project" value="UniProtKB-UniRule"/>
</dbReference>
<dbReference type="GO" id="GO:0016491">
    <property type="term" value="F:oxidoreductase activity"/>
    <property type="evidence" value="ECO:0007669"/>
    <property type="project" value="InterPro"/>
</dbReference>
<dbReference type="GO" id="GO:0008299">
    <property type="term" value="P:isoprenoid biosynthetic process"/>
    <property type="evidence" value="ECO:0007669"/>
    <property type="project" value="UniProtKB-UniRule"/>
</dbReference>
<dbReference type="CDD" id="cd02811">
    <property type="entry name" value="IDI-2_FMN"/>
    <property type="match status" value="1"/>
</dbReference>
<dbReference type="FunFam" id="3.20.20.70:FF:000115">
    <property type="entry name" value="Isopentenyl-diphosphate delta-isomerase"/>
    <property type="match status" value="1"/>
</dbReference>
<dbReference type="Gene3D" id="3.20.20.70">
    <property type="entry name" value="Aldolase class I"/>
    <property type="match status" value="1"/>
</dbReference>
<dbReference type="HAMAP" id="MF_00354">
    <property type="entry name" value="Idi_2"/>
    <property type="match status" value="1"/>
</dbReference>
<dbReference type="InterPro" id="IPR013785">
    <property type="entry name" value="Aldolase_TIM"/>
</dbReference>
<dbReference type="InterPro" id="IPR000262">
    <property type="entry name" value="FMN-dep_DH"/>
</dbReference>
<dbReference type="InterPro" id="IPR011179">
    <property type="entry name" value="IPdP_isomerase"/>
</dbReference>
<dbReference type="NCBIfam" id="TIGR02151">
    <property type="entry name" value="IPP_isom_2"/>
    <property type="match status" value="1"/>
</dbReference>
<dbReference type="PANTHER" id="PTHR43665">
    <property type="entry name" value="ISOPENTENYL-DIPHOSPHATE DELTA-ISOMERASE"/>
    <property type="match status" value="1"/>
</dbReference>
<dbReference type="PANTHER" id="PTHR43665:SF1">
    <property type="entry name" value="ISOPENTENYL-DIPHOSPHATE DELTA-ISOMERASE"/>
    <property type="match status" value="1"/>
</dbReference>
<dbReference type="Pfam" id="PF01070">
    <property type="entry name" value="FMN_dh"/>
    <property type="match status" value="1"/>
</dbReference>
<dbReference type="PIRSF" id="PIRSF003314">
    <property type="entry name" value="IPP_isomerase"/>
    <property type="match status" value="1"/>
</dbReference>
<dbReference type="SMART" id="SM01240">
    <property type="entry name" value="IMPDH"/>
    <property type="match status" value="1"/>
</dbReference>
<dbReference type="SUPFAM" id="SSF51395">
    <property type="entry name" value="FMN-linked oxidoreductases"/>
    <property type="match status" value="1"/>
</dbReference>
<gene>
    <name evidence="1" type="primary">fni</name>
    <name type="ordered locus">BAMEG_3073</name>
</gene>
<name>IDI2_BACAC</name>
<organism>
    <name type="scientific">Bacillus anthracis (strain CDC 684 / NRRL 3495)</name>
    <dbReference type="NCBI Taxonomy" id="568206"/>
    <lineage>
        <taxon>Bacteria</taxon>
        <taxon>Bacillati</taxon>
        <taxon>Bacillota</taxon>
        <taxon>Bacilli</taxon>
        <taxon>Bacillales</taxon>
        <taxon>Bacillaceae</taxon>
        <taxon>Bacillus</taxon>
        <taxon>Bacillus cereus group</taxon>
    </lineage>
</organism>
<evidence type="ECO:0000255" key="1">
    <source>
        <dbReference type="HAMAP-Rule" id="MF_00354"/>
    </source>
</evidence>
<proteinExistence type="inferred from homology"/>